<gene>
    <name evidence="1" type="primary">cysD</name>
    <name type="ordered locus">VS_2789</name>
</gene>
<sequence>MDQERLTHLKQLEAESIHIIREVAAEFDNPVMMYSIGKDSSVMLHLARKAFYPGKIPFPLLHVDTDWKFREMIEFRDRTAEKYGFDLLVHKNPEGIEMGCSPFVHGSSKHTDIMKTQGLKQALNKYGFDAAFGGARRDEEKSRAKERVYSFRDKNHTWDPKNQRPELWHTYNGQVNKGESIRVFPLSNWTELDIWQYIYLESIDIVPLYLSDKRPVVERDGMLIMVDDDRMELQEGEVIEEKSVRFRTLGCYPLTGAVESEANTLTGIIEEMLVATSSERQGRAIDHDQSGSMELKKRQGYF</sequence>
<dbReference type="EC" id="2.7.7.4" evidence="1"/>
<dbReference type="EMBL" id="FM954972">
    <property type="protein sequence ID" value="CAV20075.1"/>
    <property type="molecule type" value="Genomic_DNA"/>
</dbReference>
<dbReference type="SMR" id="B7VKY3"/>
<dbReference type="STRING" id="575788.VS_2789"/>
<dbReference type="KEGG" id="vsp:VS_2789"/>
<dbReference type="eggNOG" id="COG0175">
    <property type="taxonomic scope" value="Bacteria"/>
</dbReference>
<dbReference type="HOGENOM" id="CLU_043026_0_0_6"/>
<dbReference type="UniPathway" id="UPA00140">
    <property type="reaction ID" value="UER00204"/>
</dbReference>
<dbReference type="Proteomes" id="UP000009100">
    <property type="component" value="Chromosome 1"/>
</dbReference>
<dbReference type="GO" id="GO:0005524">
    <property type="term" value="F:ATP binding"/>
    <property type="evidence" value="ECO:0007669"/>
    <property type="project" value="UniProtKB-KW"/>
</dbReference>
<dbReference type="GO" id="GO:0004781">
    <property type="term" value="F:sulfate adenylyltransferase (ATP) activity"/>
    <property type="evidence" value="ECO:0007669"/>
    <property type="project" value="UniProtKB-UniRule"/>
</dbReference>
<dbReference type="GO" id="GO:0070814">
    <property type="term" value="P:hydrogen sulfide biosynthetic process"/>
    <property type="evidence" value="ECO:0007669"/>
    <property type="project" value="UniProtKB-UniRule"/>
</dbReference>
<dbReference type="GO" id="GO:0000103">
    <property type="term" value="P:sulfate assimilation"/>
    <property type="evidence" value="ECO:0007669"/>
    <property type="project" value="UniProtKB-UniRule"/>
</dbReference>
<dbReference type="CDD" id="cd23946">
    <property type="entry name" value="Sulfate_adenylyltransferase_2"/>
    <property type="match status" value="1"/>
</dbReference>
<dbReference type="FunFam" id="3.40.50.620:FF:000002">
    <property type="entry name" value="Sulfate adenylyltransferase subunit 2"/>
    <property type="match status" value="1"/>
</dbReference>
<dbReference type="Gene3D" id="3.40.50.620">
    <property type="entry name" value="HUPs"/>
    <property type="match status" value="1"/>
</dbReference>
<dbReference type="HAMAP" id="MF_00064">
    <property type="entry name" value="Sulf_adenylyltr_sub2"/>
    <property type="match status" value="1"/>
</dbReference>
<dbReference type="InterPro" id="IPR002500">
    <property type="entry name" value="PAPS_reduct_dom"/>
</dbReference>
<dbReference type="InterPro" id="IPR014729">
    <property type="entry name" value="Rossmann-like_a/b/a_fold"/>
</dbReference>
<dbReference type="InterPro" id="IPR011784">
    <property type="entry name" value="SO4_adenylTrfase_ssu"/>
</dbReference>
<dbReference type="InterPro" id="IPR050128">
    <property type="entry name" value="Sulfate_adenylyltrnsfr_sub2"/>
</dbReference>
<dbReference type="NCBIfam" id="TIGR02039">
    <property type="entry name" value="CysD"/>
    <property type="match status" value="1"/>
</dbReference>
<dbReference type="NCBIfam" id="NF003587">
    <property type="entry name" value="PRK05253.1"/>
    <property type="match status" value="1"/>
</dbReference>
<dbReference type="NCBIfam" id="NF009214">
    <property type="entry name" value="PRK12563.1"/>
    <property type="match status" value="1"/>
</dbReference>
<dbReference type="PANTHER" id="PTHR43196">
    <property type="entry name" value="SULFATE ADENYLYLTRANSFERASE SUBUNIT 2"/>
    <property type="match status" value="1"/>
</dbReference>
<dbReference type="PANTHER" id="PTHR43196:SF1">
    <property type="entry name" value="SULFATE ADENYLYLTRANSFERASE SUBUNIT 2"/>
    <property type="match status" value="1"/>
</dbReference>
<dbReference type="Pfam" id="PF01507">
    <property type="entry name" value="PAPS_reduct"/>
    <property type="match status" value="1"/>
</dbReference>
<dbReference type="PIRSF" id="PIRSF002936">
    <property type="entry name" value="CysDAde_trans"/>
    <property type="match status" value="1"/>
</dbReference>
<dbReference type="SUPFAM" id="SSF52402">
    <property type="entry name" value="Adenine nucleotide alpha hydrolases-like"/>
    <property type="match status" value="1"/>
</dbReference>
<name>CYSD_VIBA3</name>
<proteinExistence type="inferred from homology"/>
<feature type="chain" id="PRO_1000117949" description="Sulfate adenylyltransferase subunit 2">
    <location>
        <begin position="1"/>
        <end position="302"/>
    </location>
</feature>
<feature type="region of interest" description="Disordered" evidence="2">
    <location>
        <begin position="280"/>
        <end position="302"/>
    </location>
</feature>
<organism>
    <name type="scientific">Vibrio atlanticus (strain LGP32)</name>
    <name type="common">Vibrio splendidus (strain Mel32)</name>
    <dbReference type="NCBI Taxonomy" id="575788"/>
    <lineage>
        <taxon>Bacteria</taxon>
        <taxon>Pseudomonadati</taxon>
        <taxon>Pseudomonadota</taxon>
        <taxon>Gammaproteobacteria</taxon>
        <taxon>Vibrionales</taxon>
        <taxon>Vibrionaceae</taxon>
        <taxon>Vibrio</taxon>
    </lineage>
</organism>
<evidence type="ECO:0000255" key="1">
    <source>
        <dbReference type="HAMAP-Rule" id="MF_00064"/>
    </source>
</evidence>
<evidence type="ECO:0000256" key="2">
    <source>
        <dbReference type="SAM" id="MobiDB-lite"/>
    </source>
</evidence>
<comment type="function">
    <text evidence="1">With CysN forms the ATP sulfurylase (ATPS) that catalyzes the adenylation of sulfate producing adenosine 5'-phosphosulfate (APS) and diphosphate, the first enzymatic step in sulfur assimilation pathway. APS synthesis involves the formation of a high-energy phosphoric-sulfuric acid anhydride bond driven by GTP hydrolysis by CysN coupled to ATP hydrolysis by CysD.</text>
</comment>
<comment type="catalytic activity">
    <reaction evidence="1">
        <text>sulfate + ATP + H(+) = adenosine 5'-phosphosulfate + diphosphate</text>
        <dbReference type="Rhea" id="RHEA:18133"/>
        <dbReference type="ChEBI" id="CHEBI:15378"/>
        <dbReference type="ChEBI" id="CHEBI:16189"/>
        <dbReference type="ChEBI" id="CHEBI:30616"/>
        <dbReference type="ChEBI" id="CHEBI:33019"/>
        <dbReference type="ChEBI" id="CHEBI:58243"/>
        <dbReference type="EC" id="2.7.7.4"/>
    </reaction>
</comment>
<comment type="pathway">
    <text evidence="1">Sulfur metabolism; hydrogen sulfide biosynthesis; sulfite from sulfate: step 1/3.</text>
</comment>
<comment type="subunit">
    <text evidence="1">Heterodimer composed of CysD, the smaller subunit, and CysN.</text>
</comment>
<comment type="similarity">
    <text evidence="1">Belongs to the PAPS reductase family. CysD subfamily.</text>
</comment>
<keyword id="KW-0067">ATP-binding</keyword>
<keyword id="KW-0547">Nucleotide-binding</keyword>
<keyword id="KW-0548">Nucleotidyltransferase</keyword>
<keyword id="KW-0808">Transferase</keyword>
<reference key="1">
    <citation type="submission" date="2009-02" db="EMBL/GenBank/DDBJ databases">
        <title>Vibrio splendidus str. LGP32 complete genome.</title>
        <authorList>
            <person name="Mazel D."/>
            <person name="Le Roux F."/>
        </authorList>
    </citation>
    <scope>NUCLEOTIDE SEQUENCE [LARGE SCALE GENOMIC DNA]</scope>
    <source>
        <strain>LGP32</strain>
    </source>
</reference>
<accession>B7VKY3</accession>
<protein>
    <recommendedName>
        <fullName evidence="1">Sulfate adenylyltransferase subunit 2</fullName>
        <ecNumber evidence="1">2.7.7.4</ecNumber>
    </recommendedName>
    <alternativeName>
        <fullName evidence="1">ATP-sulfurylase small subunit</fullName>
    </alternativeName>
    <alternativeName>
        <fullName evidence="1">Sulfate adenylate transferase</fullName>
        <shortName evidence="1">SAT</shortName>
    </alternativeName>
</protein>